<sequence>MTERAVLAGGCFWGMQDLIRKLPGIESTRVGYTGGEVPNATYRNHGNHAEGIEILFDPEKTSYRQLLEFFFQIHDPTTPNRQGNDRGPSYRSAIYYVDEEQKQIALDTIADVNASGLWPGKVVTEVEPVSDFWEAEPEHQDYLEKVPNGYTCHFPRPNWVLPKRAATE</sequence>
<proteinExistence type="inferred from homology"/>
<evidence type="ECO:0000255" key="1">
    <source>
        <dbReference type="HAMAP-Rule" id="MF_01401"/>
    </source>
</evidence>
<name>MSRA2_RHOBA</name>
<comment type="function">
    <text evidence="1">Has an important function as a repair enzyme for proteins that have been inactivated by oxidation. Catalyzes the reversible oxidation-reduction of methionine sulfoxide in proteins to methionine.</text>
</comment>
<comment type="catalytic activity">
    <reaction evidence="1">
        <text>L-methionyl-[protein] + [thioredoxin]-disulfide + H2O = L-methionyl-(S)-S-oxide-[protein] + [thioredoxin]-dithiol</text>
        <dbReference type="Rhea" id="RHEA:14217"/>
        <dbReference type="Rhea" id="RHEA-COMP:10698"/>
        <dbReference type="Rhea" id="RHEA-COMP:10700"/>
        <dbReference type="Rhea" id="RHEA-COMP:12313"/>
        <dbReference type="Rhea" id="RHEA-COMP:12315"/>
        <dbReference type="ChEBI" id="CHEBI:15377"/>
        <dbReference type="ChEBI" id="CHEBI:16044"/>
        <dbReference type="ChEBI" id="CHEBI:29950"/>
        <dbReference type="ChEBI" id="CHEBI:44120"/>
        <dbReference type="ChEBI" id="CHEBI:50058"/>
        <dbReference type="EC" id="1.8.4.11"/>
    </reaction>
</comment>
<comment type="catalytic activity">
    <reaction evidence="1">
        <text>[thioredoxin]-disulfide + L-methionine + H2O = L-methionine (S)-S-oxide + [thioredoxin]-dithiol</text>
        <dbReference type="Rhea" id="RHEA:19993"/>
        <dbReference type="Rhea" id="RHEA-COMP:10698"/>
        <dbReference type="Rhea" id="RHEA-COMP:10700"/>
        <dbReference type="ChEBI" id="CHEBI:15377"/>
        <dbReference type="ChEBI" id="CHEBI:29950"/>
        <dbReference type="ChEBI" id="CHEBI:50058"/>
        <dbReference type="ChEBI" id="CHEBI:57844"/>
        <dbReference type="ChEBI" id="CHEBI:58772"/>
        <dbReference type="EC" id="1.8.4.11"/>
    </reaction>
</comment>
<comment type="similarity">
    <text evidence="1">Belongs to the MsrA Met sulfoxide reductase family.</text>
</comment>
<keyword id="KW-0560">Oxidoreductase</keyword>
<keyword id="KW-1185">Reference proteome</keyword>
<dbReference type="EC" id="1.8.4.11" evidence="1"/>
<dbReference type="EMBL" id="BX294154">
    <property type="protein sequence ID" value="CAD77276.1"/>
    <property type="molecule type" value="Genomic_DNA"/>
</dbReference>
<dbReference type="RefSeq" id="NP_870201.1">
    <property type="nucleotide sequence ID" value="NC_005027.1"/>
</dbReference>
<dbReference type="RefSeq" id="WP_011123472.1">
    <property type="nucleotide sequence ID" value="NC_005027.1"/>
</dbReference>
<dbReference type="SMR" id="Q7UJI2"/>
<dbReference type="STRING" id="243090.RB11878"/>
<dbReference type="EnsemblBacteria" id="CAD77276">
    <property type="protein sequence ID" value="CAD77276"/>
    <property type="gene ID" value="RB11878"/>
</dbReference>
<dbReference type="KEGG" id="rba:RB11878"/>
<dbReference type="PATRIC" id="fig|243090.15.peg.5730"/>
<dbReference type="eggNOG" id="COG0225">
    <property type="taxonomic scope" value="Bacteria"/>
</dbReference>
<dbReference type="HOGENOM" id="CLU_031040_10_2_0"/>
<dbReference type="InParanoid" id="Q7UJI2"/>
<dbReference type="OrthoDB" id="4174719at2"/>
<dbReference type="Proteomes" id="UP000001025">
    <property type="component" value="Chromosome"/>
</dbReference>
<dbReference type="GO" id="GO:0005737">
    <property type="term" value="C:cytoplasm"/>
    <property type="evidence" value="ECO:0000318"/>
    <property type="project" value="GO_Central"/>
</dbReference>
<dbReference type="GO" id="GO:0036456">
    <property type="term" value="F:L-methionine-(S)-S-oxide reductase activity"/>
    <property type="evidence" value="ECO:0000318"/>
    <property type="project" value="GO_Central"/>
</dbReference>
<dbReference type="GO" id="GO:0008113">
    <property type="term" value="F:peptide-methionine (S)-S-oxide reductase activity"/>
    <property type="evidence" value="ECO:0000318"/>
    <property type="project" value="GO_Central"/>
</dbReference>
<dbReference type="GO" id="GO:0034599">
    <property type="term" value="P:cellular response to oxidative stress"/>
    <property type="evidence" value="ECO:0000318"/>
    <property type="project" value="GO_Central"/>
</dbReference>
<dbReference type="GO" id="GO:0036211">
    <property type="term" value="P:protein modification process"/>
    <property type="evidence" value="ECO:0007669"/>
    <property type="project" value="UniProtKB-UniRule"/>
</dbReference>
<dbReference type="FunFam" id="3.30.1060.10:FF:000005">
    <property type="entry name" value="Peptide methionine sulfoxide reductase MsrA"/>
    <property type="match status" value="1"/>
</dbReference>
<dbReference type="Gene3D" id="3.30.1060.10">
    <property type="entry name" value="Peptide methionine sulphoxide reductase MsrA"/>
    <property type="match status" value="1"/>
</dbReference>
<dbReference type="HAMAP" id="MF_01401">
    <property type="entry name" value="MsrA"/>
    <property type="match status" value="1"/>
</dbReference>
<dbReference type="InterPro" id="IPR002569">
    <property type="entry name" value="Met_Sox_Rdtase_MsrA_dom"/>
</dbReference>
<dbReference type="InterPro" id="IPR036509">
    <property type="entry name" value="Met_Sox_Rdtase_MsrA_sf"/>
</dbReference>
<dbReference type="NCBIfam" id="TIGR00401">
    <property type="entry name" value="msrA"/>
    <property type="match status" value="1"/>
</dbReference>
<dbReference type="PANTHER" id="PTHR43774">
    <property type="entry name" value="PEPTIDE METHIONINE SULFOXIDE REDUCTASE"/>
    <property type="match status" value="1"/>
</dbReference>
<dbReference type="PANTHER" id="PTHR43774:SF1">
    <property type="entry name" value="PEPTIDE METHIONINE SULFOXIDE REDUCTASE MSRA 2"/>
    <property type="match status" value="1"/>
</dbReference>
<dbReference type="Pfam" id="PF01625">
    <property type="entry name" value="PMSR"/>
    <property type="match status" value="1"/>
</dbReference>
<dbReference type="SUPFAM" id="SSF55068">
    <property type="entry name" value="Peptide methionine sulfoxide reductase"/>
    <property type="match status" value="1"/>
</dbReference>
<protein>
    <recommendedName>
        <fullName evidence="1">Peptide methionine sulfoxide reductase MsrA 2</fullName>
        <shortName evidence="1">Protein-methionine-S-oxide reductase 2</shortName>
        <ecNumber evidence="1">1.8.4.11</ecNumber>
    </recommendedName>
    <alternativeName>
        <fullName evidence="1">Peptide-methionine (S)-S-oxide reductase 2</fullName>
        <shortName evidence="1">Peptide Met(O) reductase 2</shortName>
    </alternativeName>
</protein>
<accession>Q7UJI2</accession>
<organism>
    <name type="scientific">Rhodopirellula baltica (strain DSM 10527 / NCIMB 13988 / SH1)</name>
    <dbReference type="NCBI Taxonomy" id="243090"/>
    <lineage>
        <taxon>Bacteria</taxon>
        <taxon>Pseudomonadati</taxon>
        <taxon>Planctomycetota</taxon>
        <taxon>Planctomycetia</taxon>
        <taxon>Pirellulales</taxon>
        <taxon>Pirellulaceae</taxon>
        <taxon>Rhodopirellula</taxon>
    </lineage>
</organism>
<gene>
    <name evidence="1" type="primary">msrA2</name>
    <name type="ordered locus">RB11878</name>
</gene>
<feature type="chain" id="PRO_0000232665" description="Peptide methionine sulfoxide reductase MsrA 2">
    <location>
        <begin position="1"/>
        <end position="168"/>
    </location>
</feature>
<feature type="active site" evidence="1">
    <location>
        <position position="11"/>
    </location>
</feature>
<reference key="1">
    <citation type="journal article" date="2003" name="Proc. Natl. Acad. Sci. U.S.A.">
        <title>Complete genome sequence of the marine planctomycete Pirellula sp. strain 1.</title>
        <authorList>
            <person name="Gloeckner F.O."/>
            <person name="Kube M."/>
            <person name="Bauer M."/>
            <person name="Teeling H."/>
            <person name="Lombardot T."/>
            <person name="Ludwig W."/>
            <person name="Gade D."/>
            <person name="Beck A."/>
            <person name="Borzym K."/>
            <person name="Heitmann K."/>
            <person name="Rabus R."/>
            <person name="Schlesner H."/>
            <person name="Amann R."/>
            <person name="Reinhardt R."/>
        </authorList>
    </citation>
    <scope>NUCLEOTIDE SEQUENCE [LARGE SCALE GENOMIC DNA]</scope>
    <source>
        <strain>DSM 10527 / NCIMB 13988 / SH1</strain>
    </source>
</reference>